<comment type="catalytic activity">
    <reaction evidence="2">
        <text>5-phospho-beta-D-ribosylamine + glycine + ATP = N(1)-(5-phospho-beta-D-ribosyl)glycinamide + ADP + phosphate + H(+)</text>
        <dbReference type="Rhea" id="RHEA:17453"/>
        <dbReference type="ChEBI" id="CHEBI:15378"/>
        <dbReference type="ChEBI" id="CHEBI:30616"/>
        <dbReference type="ChEBI" id="CHEBI:43474"/>
        <dbReference type="ChEBI" id="CHEBI:57305"/>
        <dbReference type="ChEBI" id="CHEBI:58681"/>
        <dbReference type="ChEBI" id="CHEBI:143788"/>
        <dbReference type="ChEBI" id="CHEBI:456216"/>
        <dbReference type="EC" id="6.3.4.13"/>
    </reaction>
</comment>
<comment type="cofactor">
    <cofactor evidence="1">
        <name>Mg(2+)</name>
        <dbReference type="ChEBI" id="CHEBI:18420"/>
    </cofactor>
    <cofactor evidence="1">
        <name>Mn(2+)</name>
        <dbReference type="ChEBI" id="CHEBI:29035"/>
    </cofactor>
    <text evidence="1">Binds 2 magnesium or manganese ions per subunit.</text>
</comment>
<comment type="pathway">
    <text evidence="2">Purine metabolism; IMP biosynthesis via de novo pathway; N(1)-(5-phospho-D-ribosyl)glycinamide from 5-phospho-alpha-D-ribose 1-diphosphate: step 2/2.</text>
</comment>
<comment type="similarity">
    <text evidence="2">Belongs to the GARS family.</text>
</comment>
<protein>
    <recommendedName>
        <fullName evidence="2">Phosphoribosylamine--glycine ligase</fullName>
        <ecNumber evidence="2">6.3.4.13</ecNumber>
    </recommendedName>
    <alternativeName>
        <fullName evidence="2">GARS</fullName>
    </alternativeName>
    <alternativeName>
        <fullName evidence="2">Glycinamide ribonucleotide synthetase</fullName>
    </alternativeName>
    <alternativeName>
        <fullName evidence="2">Phosphoribosylglycinamide synthetase</fullName>
    </alternativeName>
</protein>
<proteinExistence type="inferred from homology"/>
<name>PUR2_METAR</name>
<evidence type="ECO:0000250" key="1"/>
<evidence type="ECO:0000255" key="2">
    <source>
        <dbReference type="HAMAP-Rule" id="MF_00138"/>
    </source>
</evidence>
<dbReference type="EC" id="6.3.4.13" evidence="2"/>
<dbReference type="EMBL" id="AM114193">
    <property type="protein sequence ID" value="CAJ35939.1"/>
    <property type="molecule type" value="Genomic_DNA"/>
</dbReference>
<dbReference type="RefSeq" id="WP_012036566.1">
    <property type="nucleotide sequence ID" value="NC_009464.1"/>
</dbReference>
<dbReference type="SMR" id="Q0W6Q4"/>
<dbReference type="STRING" id="351160.RCIX513"/>
<dbReference type="GeneID" id="5144567"/>
<dbReference type="KEGG" id="rci:RCIX513"/>
<dbReference type="PATRIC" id="fig|351160.9.peg.2298"/>
<dbReference type="eggNOG" id="arCOG04415">
    <property type="taxonomic scope" value="Archaea"/>
</dbReference>
<dbReference type="OrthoDB" id="146558at2157"/>
<dbReference type="UniPathway" id="UPA00074">
    <property type="reaction ID" value="UER00125"/>
</dbReference>
<dbReference type="Proteomes" id="UP000000663">
    <property type="component" value="Chromosome"/>
</dbReference>
<dbReference type="GO" id="GO:0005524">
    <property type="term" value="F:ATP binding"/>
    <property type="evidence" value="ECO:0007669"/>
    <property type="project" value="UniProtKB-KW"/>
</dbReference>
<dbReference type="GO" id="GO:0046872">
    <property type="term" value="F:metal ion binding"/>
    <property type="evidence" value="ECO:0007669"/>
    <property type="project" value="UniProtKB-KW"/>
</dbReference>
<dbReference type="GO" id="GO:0004637">
    <property type="term" value="F:phosphoribosylamine-glycine ligase activity"/>
    <property type="evidence" value="ECO:0007669"/>
    <property type="project" value="UniProtKB-UniRule"/>
</dbReference>
<dbReference type="GO" id="GO:0006189">
    <property type="term" value="P:'de novo' IMP biosynthetic process"/>
    <property type="evidence" value="ECO:0007669"/>
    <property type="project" value="UniProtKB-UniRule"/>
</dbReference>
<dbReference type="GO" id="GO:0009113">
    <property type="term" value="P:purine nucleobase biosynthetic process"/>
    <property type="evidence" value="ECO:0007669"/>
    <property type="project" value="InterPro"/>
</dbReference>
<dbReference type="Gene3D" id="3.40.50.20">
    <property type="match status" value="1"/>
</dbReference>
<dbReference type="Gene3D" id="3.30.1490.20">
    <property type="entry name" value="ATP-grasp fold, A domain"/>
    <property type="match status" value="1"/>
</dbReference>
<dbReference type="Gene3D" id="3.30.470.20">
    <property type="entry name" value="ATP-grasp fold, B domain"/>
    <property type="match status" value="1"/>
</dbReference>
<dbReference type="Gene3D" id="3.90.600.10">
    <property type="entry name" value="Phosphoribosylglycinamide synthetase, C-terminal domain"/>
    <property type="match status" value="1"/>
</dbReference>
<dbReference type="HAMAP" id="MF_00138">
    <property type="entry name" value="GARS"/>
    <property type="match status" value="1"/>
</dbReference>
<dbReference type="InterPro" id="IPR011761">
    <property type="entry name" value="ATP-grasp"/>
</dbReference>
<dbReference type="InterPro" id="IPR013815">
    <property type="entry name" value="ATP_grasp_subdomain_1"/>
</dbReference>
<dbReference type="InterPro" id="IPR016185">
    <property type="entry name" value="PreATP-grasp_dom_sf"/>
</dbReference>
<dbReference type="InterPro" id="IPR020561">
    <property type="entry name" value="PRibGlycinamid_synth_ATP-grasp"/>
</dbReference>
<dbReference type="InterPro" id="IPR000115">
    <property type="entry name" value="PRibGlycinamide_synth"/>
</dbReference>
<dbReference type="InterPro" id="IPR020560">
    <property type="entry name" value="PRibGlycinamide_synth_C-dom"/>
</dbReference>
<dbReference type="InterPro" id="IPR037123">
    <property type="entry name" value="PRibGlycinamide_synth_C_sf"/>
</dbReference>
<dbReference type="InterPro" id="IPR020559">
    <property type="entry name" value="PRibGlycinamide_synth_CS"/>
</dbReference>
<dbReference type="InterPro" id="IPR020562">
    <property type="entry name" value="PRibGlycinamide_synth_N"/>
</dbReference>
<dbReference type="InterPro" id="IPR011054">
    <property type="entry name" value="Rudment_hybrid_motif"/>
</dbReference>
<dbReference type="NCBIfam" id="TIGR00877">
    <property type="entry name" value="purD"/>
    <property type="match status" value="1"/>
</dbReference>
<dbReference type="PANTHER" id="PTHR43472">
    <property type="entry name" value="PHOSPHORIBOSYLAMINE--GLYCINE LIGASE"/>
    <property type="match status" value="1"/>
</dbReference>
<dbReference type="PANTHER" id="PTHR43472:SF1">
    <property type="entry name" value="PHOSPHORIBOSYLAMINE--GLYCINE LIGASE, CHLOROPLASTIC"/>
    <property type="match status" value="1"/>
</dbReference>
<dbReference type="Pfam" id="PF01071">
    <property type="entry name" value="GARS_A"/>
    <property type="match status" value="1"/>
</dbReference>
<dbReference type="Pfam" id="PF02843">
    <property type="entry name" value="GARS_C"/>
    <property type="match status" value="1"/>
</dbReference>
<dbReference type="Pfam" id="PF02844">
    <property type="entry name" value="GARS_N"/>
    <property type="match status" value="1"/>
</dbReference>
<dbReference type="SMART" id="SM01209">
    <property type="entry name" value="GARS_A"/>
    <property type="match status" value="1"/>
</dbReference>
<dbReference type="SMART" id="SM01210">
    <property type="entry name" value="GARS_C"/>
    <property type="match status" value="1"/>
</dbReference>
<dbReference type="SUPFAM" id="SSF56059">
    <property type="entry name" value="Glutathione synthetase ATP-binding domain-like"/>
    <property type="match status" value="1"/>
</dbReference>
<dbReference type="SUPFAM" id="SSF52440">
    <property type="entry name" value="PreATP-grasp domain"/>
    <property type="match status" value="1"/>
</dbReference>
<dbReference type="SUPFAM" id="SSF51246">
    <property type="entry name" value="Rudiment single hybrid motif"/>
    <property type="match status" value="1"/>
</dbReference>
<dbReference type="PROSITE" id="PS50975">
    <property type="entry name" value="ATP_GRASP"/>
    <property type="match status" value="1"/>
</dbReference>
<dbReference type="PROSITE" id="PS00184">
    <property type="entry name" value="GARS"/>
    <property type="match status" value="1"/>
</dbReference>
<sequence length="433" mass="48138">MKVLVIGSGGREHAIVEALARSEYHPKIYAVMGNANPGIRRRAEDYLLEKETNVPAIVQYAQDCNVDMAIIGPESPLAAGLADELELNGIPVVGPRKDAARIEFDKAWTREFMARNNIKGLPKFKVYDDYDDACRYLEDNPDVVVKPAGLTGGKGVKVMGEHMHTLEEAREYVKSVLEHDRVVIEERLKGEEVTIMAFVDGKHVAPMPTVQDHKRAYEDDQGPNTGGMGSYTDNIDLLPFMTLDDYNEGVAIMEQTVKAMEKDVGVPYKGVLYGQFMITRDGMKVVEFNARFGDPEAMNVLSLLKTDFVDICEAIVDGSLDKLKIEFERSATVCKYVVPAGYPDNPVKDAPLTVVEKPEYLVYYASVNERDGKVYTTSSRSLAIVGVADTIADAEILSEEGLSNVQGEFHCRHDIGKERLIRKRIEHMDAIRG</sequence>
<feature type="chain" id="PRO_1000018831" description="Phosphoribosylamine--glycine ligase">
    <location>
        <begin position="1"/>
        <end position="433"/>
    </location>
</feature>
<feature type="domain" description="ATP-grasp" evidence="2">
    <location>
        <begin position="111"/>
        <end position="317"/>
    </location>
</feature>
<feature type="binding site" evidence="2">
    <location>
        <begin position="138"/>
        <end position="194"/>
    </location>
    <ligand>
        <name>ATP</name>
        <dbReference type="ChEBI" id="CHEBI:30616"/>
    </ligand>
</feature>
<feature type="binding site" evidence="2">
    <location>
        <position position="275"/>
    </location>
    <ligand>
        <name>Mg(2+)</name>
        <dbReference type="ChEBI" id="CHEBI:18420"/>
        <label>1</label>
    </ligand>
</feature>
<feature type="binding site" evidence="2">
    <location>
        <position position="275"/>
    </location>
    <ligand>
        <name>Mn(2+)</name>
        <dbReference type="ChEBI" id="CHEBI:29035"/>
        <label>1</label>
    </ligand>
</feature>
<feature type="binding site" evidence="2">
    <location>
        <position position="287"/>
    </location>
    <ligand>
        <name>Mg(2+)</name>
        <dbReference type="ChEBI" id="CHEBI:18420"/>
        <label>1</label>
    </ligand>
</feature>
<feature type="binding site" evidence="2">
    <location>
        <position position="287"/>
    </location>
    <ligand>
        <name>Mg(2+)</name>
        <dbReference type="ChEBI" id="CHEBI:18420"/>
        <label>2</label>
    </ligand>
</feature>
<feature type="binding site" evidence="2">
    <location>
        <position position="287"/>
    </location>
    <ligand>
        <name>Mn(2+)</name>
        <dbReference type="ChEBI" id="CHEBI:29035"/>
        <label>1</label>
    </ligand>
</feature>
<feature type="binding site" evidence="2">
    <location>
        <position position="287"/>
    </location>
    <ligand>
        <name>Mn(2+)</name>
        <dbReference type="ChEBI" id="CHEBI:29035"/>
        <label>2</label>
    </ligand>
</feature>
<feature type="binding site" evidence="2">
    <location>
        <position position="289"/>
    </location>
    <ligand>
        <name>Mg(2+)</name>
        <dbReference type="ChEBI" id="CHEBI:18420"/>
        <label>2</label>
    </ligand>
</feature>
<feature type="binding site" evidence="2">
    <location>
        <position position="289"/>
    </location>
    <ligand>
        <name>Mn(2+)</name>
        <dbReference type="ChEBI" id="CHEBI:29035"/>
        <label>2</label>
    </ligand>
</feature>
<keyword id="KW-0067">ATP-binding</keyword>
<keyword id="KW-0436">Ligase</keyword>
<keyword id="KW-0460">Magnesium</keyword>
<keyword id="KW-0464">Manganese</keyword>
<keyword id="KW-0479">Metal-binding</keyword>
<keyword id="KW-0547">Nucleotide-binding</keyword>
<keyword id="KW-0658">Purine biosynthesis</keyword>
<keyword id="KW-1185">Reference proteome</keyword>
<reference key="1">
    <citation type="journal article" date="2006" name="Science">
        <title>Genome of rice cluster I archaea -- the key methane producers in the rice rhizosphere.</title>
        <authorList>
            <person name="Erkel C."/>
            <person name="Kube M."/>
            <person name="Reinhardt R."/>
            <person name="Liesack W."/>
        </authorList>
    </citation>
    <scope>NUCLEOTIDE SEQUENCE [LARGE SCALE GENOMIC DNA]</scope>
    <source>
        <strain>DSM 22066 / NBRC 105507 / MRE50</strain>
    </source>
</reference>
<gene>
    <name evidence="2" type="primary">purD</name>
    <name type="ordered locus">UNCMA_22460</name>
    <name type="ORF">RCIX513</name>
</gene>
<organism>
    <name type="scientific">Methanocella arvoryzae (strain DSM 22066 / NBRC 105507 / MRE50)</name>
    <dbReference type="NCBI Taxonomy" id="351160"/>
    <lineage>
        <taxon>Archaea</taxon>
        <taxon>Methanobacteriati</taxon>
        <taxon>Methanobacteriota</taxon>
        <taxon>Stenosarchaea group</taxon>
        <taxon>Methanomicrobia</taxon>
        <taxon>Methanocellales</taxon>
        <taxon>Methanocellaceae</taxon>
        <taxon>Methanocella</taxon>
    </lineage>
</organism>
<accession>Q0W6Q4</accession>